<name>UBIA_AROAE</name>
<sequence length="294" mass="32191">MIAPATLSSRLPLYLRLMRLDKPIGILLLMWPTLWALWLAADGFPPLHLIVIFALGTVLMRSAGCVINDYADRDFDGHVERTRTRPLTTGAVTVREALLLAAGLSLVSFVLILPLDPLVRWLSLPALFLAASYPYTKRFLAIPQAYLGIAFGFGIPMGFAAVQGEVPAIAWLLLLANIFWAVAYDTEYAMVDRPDDLKIGIKTSAITFGRFDVAAVMLCYAVAFGLIAAVGIATGRGPWFFGGIAIAAAIAIYHYTLIRDRDRARCFRAFLHNNWVGAVLFVALVIDYVAFPAA</sequence>
<keyword id="KW-0997">Cell inner membrane</keyword>
<keyword id="KW-1003">Cell membrane</keyword>
<keyword id="KW-0460">Magnesium</keyword>
<keyword id="KW-0472">Membrane</keyword>
<keyword id="KW-1185">Reference proteome</keyword>
<keyword id="KW-0808">Transferase</keyword>
<keyword id="KW-0812">Transmembrane</keyword>
<keyword id="KW-1133">Transmembrane helix</keyword>
<keyword id="KW-0831">Ubiquinone biosynthesis</keyword>
<organism>
    <name type="scientific">Aromatoleum aromaticum (strain DSM 19018 / LMG 30748 / EbN1)</name>
    <name type="common">Azoarcus sp. (strain EbN1)</name>
    <dbReference type="NCBI Taxonomy" id="76114"/>
    <lineage>
        <taxon>Bacteria</taxon>
        <taxon>Pseudomonadati</taxon>
        <taxon>Pseudomonadota</taxon>
        <taxon>Betaproteobacteria</taxon>
        <taxon>Rhodocyclales</taxon>
        <taxon>Rhodocyclaceae</taxon>
        <taxon>Aromatoleum</taxon>
    </lineage>
</organism>
<protein>
    <recommendedName>
        <fullName evidence="1">4-hydroxybenzoate octaprenyltransferase</fullName>
        <ecNumber evidence="1">2.5.1.39</ecNumber>
    </recommendedName>
    <alternativeName>
        <fullName evidence="1">4-HB polyprenyltransferase</fullName>
    </alternativeName>
</protein>
<accession>Q5P5M0</accession>
<evidence type="ECO:0000255" key="1">
    <source>
        <dbReference type="HAMAP-Rule" id="MF_01635"/>
    </source>
</evidence>
<evidence type="ECO:0000305" key="2"/>
<comment type="function">
    <text evidence="1">Catalyzes the prenylation of para-hydroxybenzoate (PHB) with an all-trans polyprenyl group. Mediates the second step in the final reaction sequence of ubiquinone-8 (UQ-8) biosynthesis, which is the condensation of the polyisoprenoid side chain with PHB, generating the first membrane-bound Q intermediate 3-octaprenyl-4-hydroxybenzoate.</text>
</comment>
<comment type="catalytic activity">
    <reaction evidence="1">
        <text>all-trans-octaprenyl diphosphate + 4-hydroxybenzoate = 4-hydroxy-3-(all-trans-octaprenyl)benzoate + diphosphate</text>
        <dbReference type="Rhea" id="RHEA:27782"/>
        <dbReference type="ChEBI" id="CHEBI:1617"/>
        <dbReference type="ChEBI" id="CHEBI:17879"/>
        <dbReference type="ChEBI" id="CHEBI:33019"/>
        <dbReference type="ChEBI" id="CHEBI:57711"/>
        <dbReference type="EC" id="2.5.1.39"/>
    </reaction>
</comment>
<comment type="cofactor">
    <cofactor evidence="1">
        <name>Mg(2+)</name>
        <dbReference type="ChEBI" id="CHEBI:18420"/>
    </cofactor>
</comment>
<comment type="pathway">
    <text evidence="1">Cofactor biosynthesis; ubiquinone biosynthesis.</text>
</comment>
<comment type="subcellular location">
    <subcellularLocation>
        <location evidence="1">Cell inner membrane</location>
        <topology evidence="1">Multi-pass membrane protein</topology>
    </subcellularLocation>
</comment>
<comment type="similarity">
    <text evidence="1">Belongs to the UbiA prenyltransferase family.</text>
</comment>
<comment type="sequence caution" evidence="2">
    <conflict type="erroneous initiation">
        <sequence resource="EMBL-CDS" id="CAI07392"/>
    </conflict>
</comment>
<dbReference type="EC" id="2.5.1.39" evidence="1"/>
<dbReference type="EMBL" id="CR555306">
    <property type="protein sequence ID" value="CAI07392.1"/>
    <property type="status" value="ALT_INIT"/>
    <property type="molecule type" value="Genomic_DNA"/>
</dbReference>
<dbReference type="SMR" id="Q5P5M0"/>
<dbReference type="STRING" id="76114.ebA2294"/>
<dbReference type="KEGG" id="eba:ebA2294"/>
<dbReference type="eggNOG" id="COG0382">
    <property type="taxonomic scope" value="Bacteria"/>
</dbReference>
<dbReference type="HOGENOM" id="CLU_034879_1_0_4"/>
<dbReference type="UniPathway" id="UPA00232"/>
<dbReference type="Proteomes" id="UP000006552">
    <property type="component" value="Chromosome"/>
</dbReference>
<dbReference type="GO" id="GO:0005886">
    <property type="term" value="C:plasma membrane"/>
    <property type="evidence" value="ECO:0007669"/>
    <property type="project" value="UniProtKB-SubCell"/>
</dbReference>
<dbReference type="GO" id="GO:0008412">
    <property type="term" value="F:4-hydroxybenzoate polyprenyltransferase activity"/>
    <property type="evidence" value="ECO:0007669"/>
    <property type="project" value="UniProtKB-UniRule"/>
</dbReference>
<dbReference type="GO" id="GO:0006744">
    <property type="term" value="P:ubiquinone biosynthetic process"/>
    <property type="evidence" value="ECO:0007669"/>
    <property type="project" value="UniProtKB-UniRule"/>
</dbReference>
<dbReference type="CDD" id="cd13959">
    <property type="entry name" value="PT_UbiA_COQ2"/>
    <property type="match status" value="1"/>
</dbReference>
<dbReference type="FunFam" id="1.10.357.140:FF:000002">
    <property type="entry name" value="4-hydroxybenzoate octaprenyltransferase"/>
    <property type="match status" value="1"/>
</dbReference>
<dbReference type="FunFam" id="1.20.120.1780:FF:000001">
    <property type="entry name" value="4-hydroxybenzoate octaprenyltransferase"/>
    <property type="match status" value="1"/>
</dbReference>
<dbReference type="Gene3D" id="1.10.357.140">
    <property type="entry name" value="UbiA prenyltransferase"/>
    <property type="match status" value="1"/>
</dbReference>
<dbReference type="Gene3D" id="1.20.120.1780">
    <property type="entry name" value="UbiA prenyltransferase"/>
    <property type="match status" value="1"/>
</dbReference>
<dbReference type="HAMAP" id="MF_01635">
    <property type="entry name" value="UbiA"/>
    <property type="match status" value="1"/>
</dbReference>
<dbReference type="InterPro" id="IPR006370">
    <property type="entry name" value="HB_polyprenyltransferase-like"/>
</dbReference>
<dbReference type="InterPro" id="IPR039653">
    <property type="entry name" value="Prenyltransferase"/>
</dbReference>
<dbReference type="InterPro" id="IPR000537">
    <property type="entry name" value="UbiA_prenyltransferase"/>
</dbReference>
<dbReference type="InterPro" id="IPR030470">
    <property type="entry name" value="UbiA_prenylTrfase_CS"/>
</dbReference>
<dbReference type="InterPro" id="IPR044878">
    <property type="entry name" value="UbiA_sf"/>
</dbReference>
<dbReference type="NCBIfam" id="TIGR01474">
    <property type="entry name" value="ubiA_proteo"/>
    <property type="match status" value="1"/>
</dbReference>
<dbReference type="PANTHER" id="PTHR11048:SF28">
    <property type="entry name" value="4-HYDROXYBENZOATE POLYPRENYLTRANSFERASE, MITOCHONDRIAL"/>
    <property type="match status" value="1"/>
</dbReference>
<dbReference type="PANTHER" id="PTHR11048">
    <property type="entry name" value="PRENYLTRANSFERASES"/>
    <property type="match status" value="1"/>
</dbReference>
<dbReference type="Pfam" id="PF01040">
    <property type="entry name" value="UbiA"/>
    <property type="match status" value="1"/>
</dbReference>
<dbReference type="PROSITE" id="PS00943">
    <property type="entry name" value="UBIA"/>
    <property type="match status" value="1"/>
</dbReference>
<proteinExistence type="inferred from homology"/>
<feature type="chain" id="PRO_0000262778" description="4-hydroxybenzoate octaprenyltransferase">
    <location>
        <begin position="1"/>
        <end position="294"/>
    </location>
</feature>
<feature type="transmembrane region" description="Helical" evidence="1">
    <location>
        <begin position="24"/>
        <end position="44"/>
    </location>
</feature>
<feature type="transmembrane region" description="Helical" evidence="1">
    <location>
        <begin position="47"/>
        <end position="67"/>
    </location>
</feature>
<feature type="transmembrane region" description="Helical" evidence="1">
    <location>
        <begin position="99"/>
        <end position="119"/>
    </location>
</feature>
<feature type="transmembrane region" description="Helical" evidence="1">
    <location>
        <begin position="139"/>
        <end position="159"/>
    </location>
</feature>
<feature type="transmembrane region" description="Helical" evidence="1">
    <location>
        <begin position="164"/>
        <end position="184"/>
    </location>
</feature>
<feature type="transmembrane region" description="Helical" evidence="1">
    <location>
        <begin position="213"/>
        <end position="233"/>
    </location>
</feature>
<feature type="transmembrane region" description="Helical" evidence="1">
    <location>
        <begin position="238"/>
        <end position="258"/>
    </location>
</feature>
<feature type="transmembrane region" description="Helical" evidence="1">
    <location>
        <begin position="274"/>
        <end position="294"/>
    </location>
</feature>
<gene>
    <name evidence="1" type="primary">ubiA</name>
    <name type="ordered locus">AZOSEA12670</name>
    <name type="ORF">ebA2294</name>
</gene>
<reference key="1">
    <citation type="journal article" date="2005" name="Arch. Microbiol.">
        <title>The genome sequence of an anaerobic aromatic-degrading denitrifying bacterium, strain EbN1.</title>
        <authorList>
            <person name="Rabus R."/>
            <person name="Kube M."/>
            <person name="Heider J."/>
            <person name="Beck A."/>
            <person name="Heitmann K."/>
            <person name="Widdel F."/>
            <person name="Reinhardt R."/>
        </authorList>
    </citation>
    <scope>NUCLEOTIDE SEQUENCE [LARGE SCALE GENOMIC DNA]</scope>
    <source>
        <strain>DSM 19018 / LMG 30748 / EbN1</strain>
    </source>
</reference>